<accession>O74733</accession>
<gene>
    <name type="primary">cft1</name>
    <name type="ORF">SPBC1709.08</name>
</gene>
<evidence type="ECO:0000250" key="1"/>
<evidence type="ECO:0000256" key="2">
    <source>
        <dbReference type="SAM" id="MobiDB-lite"/>
    </source>
</evidence>
<evidence type="ECO:0000269" key="3">
    <source>
    </source>
</evidence>
<evidence type="ECO:0000305" key="4"/>
<keyword id="KW-0963">Cytoplasm</keyword>
<keyword id="KW-0507">mRNA processing</keyword>
<keyword id="KW-0539">Nucleus</keyword>
<keyword id="KW-1185">Reference proteome</keyword>
<keyword id="KW-0694">RNA-binding</keyword>
<organism>
    <name type="scientific">Schizosaccharomyces pombe (strain 972 / ATCC 24843)</name>
    <name type="common">Fission yeast</name>
    <dbReference type="NCBI Taxonomy" id="284812"/>
    <lineage>
        <taxon>Eukaryota</taxon>
        <taxon>Fungi</taxon>
        <taxon>Dikarya</taxon>
        <taxon>Ascomycota</taxon>
        <taxon>Taphrinomycotina</taxon>
        <taxon>Schizosaccharomycetes</taxon>
        <taxon>Schizosaccharomycetales</taxon>
        <taxon>Schizosaccharomycetaceae</taxon>
        <taxon>Schizosaccharomyces</taxon>
    </lineage>
</organism>
<sequence>MSTIFQDLVDSTVIKNAVQGQFTSLVSNNLVVSKVNSLHLFEIEKIQKDESSFPLDDSLQNEFSTSIIDESQAFMETNMHLIRTNEQTTYVLRLVSQVKVFGTITEISALKGKGSNGCDLLIMLTDYAKVSTLEWDMQSQSFVTNSLHYYEDVKSSNICSSHTPTQLLVDPDSDCCLLRFLTDMMAIIPYPANEDLDMEEAAIENSKISSSYAYKPSFVLASSQLDASISRILDVKFLYGYREPTLAILYSPEQTSTVTLPLRKDTVLFSLVTLDLEQRASAVITTIQSLPYDIYASVSIPTPLGGSLLLGGNELIYVDSAGRTVGIGVNSYYSKCTDFPLQDQSDFNLELEGTIAIPLTSSKTETPFVVLVHTSGQFFYLDFLLDGKSVKGLSLQALDLEINDDFLKSGITCAVPAGENLVFLGSQTTDSYLLRWSRRTTNEEVRLDEGDDTLYGTNDAEMDDMLDIYETDESVGSKRKIAYENGPLRLEICDVLTNIGPITDFAVGKAGSYSYFPQDNHGPLELVGTAGADGAGGLVVFRRNIFPLIAGEFQFDGCEALWTVSISGKLRNMKSRIQAQYSNPELETYLVLSKEKESFIFLAGETFDEVQHSDFSKDSKTLNVGSLLSGMRMVQICPTSLRVYDSNLRLTQLFNFSKKQIVVSTSICDPCIIVVFLGGGIALYKMDLKSQRLIKTDLQNRLSDVKTASLVSPDSSALFAKLFTYNETLNAKGQIANGMNDSASETDLDIQPNHKTSNNDQMGYDQSVSADDVPEVDNTIVTEKNVSNLDQESLEKHPILFALTDEGKLKVYNLADFSLLMECDVFDLPPTLFNGMESERTYFNKESSQELVELLVADLGDDFKEPHLFLRSRLNEITVYKAFLYSNTDKHKNLLAFAKVPQETMTREFQANVGTPRDAESTMEKKASSSVDHLKMTALEVVGNHSAVFVTGRKPFLILSTLHSNAKFFPISSNIPILSVAPFHAHHAPQGYIYVDENSFIRICKFQEDFEYDNKWPYKKVSLGKQINGIAYHPTKMVYAVGSAVPIEFKVTDEDGNEPYAITDDNDYLPMANTGSLDLVSPLTWTVIDSYEFQQFEIPLSVALVNLEVSETTKLRKPYIAVGTSITKGEDIAVRGSTYLFEIIDVVPQPGRPETRHKLKLVTREEIKGTVAVVCEVDGYLLSGQGQKVIVRALEDEDHLVGVSFIDLGSYTLSAKCLRNLLLFGDVRQNVTFVGFAEEPYRMTLFSKGQEALNVSAADFLVQGENLYFVVADTSGNLRLLAYDPENPESHSGERLVTRGDFHIGNVITAMTILPKEKKHQNAEYGYDTGDDFSCVMVNSDGGLQMLVPISDRVYRRLNIIQNYLANRVNTIGGLNPKSYRLITSPSNLTNPTRRILDGMLIDYFTYMSVAHRHEMAHKCGVPVSTIMNDLVELDEALSYM</sequence>
<comment type="function">
    <text evidence="1">RNA-binding component of the cleavage and polyadenylation factor (CPF) complex, which plays a key role in polyadenylation-dependent pre-mRNA 3'-end formation and cooperates with cleavage factors including the CFIA complex and NAB4/CFIB. Involved in poly(A) site recognition. May be involved in coupling transcription termination and mRNA 3'-end formation (By similarity).</text>
</comment>
<comment type="subcellular location">
    <subcellularLocation>
        <location evidence="3">Cytoplasm</location>
    </subcellularLocation>
    <subcellularLocation>
        <location evidence="3">Nucleus</location>
    </subcellularLocation>
</comment>
<comment type="similarity">
    <text evidence="4">Belongs to the CFT1 family.</text>
</comment>
<dbReference type="EMBL" id="CU329671">
    <property type="protein sequence ID" value="CAA21247.1"/>
    <property type="molecule type" value="Genomic_DNA"/>
</dbReference>
<dbReference type="PIR" id="T39636">
    <property type="entry name" value="T39636"/>
</dbReference>
<dbReference type="RefSeq" id="NP_595441.1">
    <property type="nucleotide sequence ID" value="NM_001021350.2"/>
</dbReference>
<dbReference type="SMR" id="O74733"/>
<dbReference type="BioGRID" id="276248">
    <property type="interactions" value="21"/>
</dbReference>
<dbReference type="FunCoup" id="O74733">
    <property type="interactions" value="869"/>
</dbReference>
<dbReference type="IntAct" id="O74733">
    <property type="interactions" value="1"/>
</dbReference>
<dbReference type="STRING" id="284812.O74733"/>
<dbReference type="iPTMnet" id="O74733"/>
<dbReference type="PaxDb" id="4896-SPBC1709.08.1"/>
<dbReference type="EnsemblFungi" id="SPBC1709.08.1">
    <property type="protein sequence ID" value="SPBC1709.08.1:pep"/>
    <property type="gene ID" value="SPBC1709.08"/>
</dbReference>
<dbReference type="GeneID" id="2539694"/>
<dbReference type="KEGG" id="spo:2539694"/>
<dbReference type="PomBase" id="SPBC1709.08">
    <property type="gene designation" value="cft1"/>
</dbReference>
<dbReference type="VEuPathDB" id="FungiDB:SPBC1709.08"/>
<dbReference type="eggNOG" id="KOG1896">
    <property type="taxonomic scope" value="Eukaryota"/>
</dbReference>
<dbReference type="HOGENOM" id="CLU_002414_0_0_1"/>
<dbReference type="InParanoid" id="O74733"/>
<dbReference type="OMA" id="PMTKFKL"/>
<dbReference type="PhylomeDB" id="O74733"/>
<dbReference type="Reactome" id="R-SPO-159231">
    <property type="pathway name" value="Transport of Mature mRNA Derived from an Intronless Transcript"/>
</dbReference>
<dbReference type="Reactome" id="R-SPO-77595">
    <property type="pathway name" value="Processing of Intronless Pre-mRNAs"/>
</dbReference>
<dbReference type="PRO" id="PR:O74733"/>
<dbReference type="Proteomes" id="UP000002485">
    <property type="component" value="Chromosome II"/>
</dbReference>
<dbReference type="GO" id="GO:0005829">
    <property type="term" value="C:cytosol"/>
    <property type="evidence" value="ECO:0007005"/>
    <property type="project" value="PomBase"/>
</dbReference>
<dbReference type="GO" id="GO:0005847">
    <property type="term" value="C:mRNA cleavage and polyadenylation specificity factor complex"/>
    <property type="evidence" value="ECO:0000314"/>
    <property type="project" value="PomBase"/>
</dbReference>
<dbReference type="GO" id="GO:0005634">
    <property type="term" value="C:nucleus"/>
    <property type="evidence" value="ECO:0007005"/>
    <property type="project" value="PomBase"/>
</dbReference>
<dbReference type="GO" id="GO:0003723">
    <property type="term" value="F:RNA binding"/>
    <property type="evidence" value="ECO:0007669"/>
    <property type="project" value="UniProtKB-KW"/>
</dbReference>
<dbReference type="GO" id="GO:0180010">
    <property type="term" value="P:co-transcriptional mRNA 3'-end processing, cleavage and polyadenylation pathway"/>
    <property type="evidence" value="ECO:0000305"/>
    <property type="project" value="PomBase"/>
</dbReference>
<dbReference type="Gene3D" id="2.130.10.10">
    <property type="entry name" value="YVTN repeat-like/Quinoprotein amine dehydrogenase"/>
    <property type="match status" value="2"/>
</dbReference>
<dbReference type="InterPro" id="IPR018846">
    <property type="entry name" value="Beta-prop_RSE1/DDB1/CPSF1_1st"/>
</dbReference>
<dbReference type="InterPro" id="IPR004871">
    <property type="entry name" value="Cleavage/polyA-sp_fac_asu_C"/>
</dbReference>
<dbReference type="InterPro" id="IPR050358">
    <property type="entry name" value="RSE1/DDB1/CFT1/CPSF1"/>
</dbReference>
<dbReference type="InterPro" id="IPR015943">
    <property type="entry name" value="WD40/YVTN_repeat-like_dom_sf"/>
</dbReference>
<dbReference type="PANTHER" id="PTHR10644">
    <property type="entry name" value="DNA REPAIR/RNA PROCESSING CPSF FAMILY"/>
    <property type="match status" value="1"/>
</dbReference>
<dbReference type="Pfam" id="PF10433">
    <property type="entry name" value="Beta-prop_RSE1_1st"/>
    <property type="match status" value="1"/>
</dbReference>
<dbReference type="Pfam" id="PF03178">
    <property type="entry name" value="CPSF_A"/>
    <property type="match status" value="1"/>
</dbReference>
<feature type="chain" id="PRO_0000290635" description="Protein cft1">
    <location>
        <begin position="1"/>
        <end position="1441"/>
    </location>
</feature>
<feature type="region of interest" description="Disordered" evidence="2">
    <location>
        <begin position="741"/>
        <end position="763"/>
    </location>
</feature>
<feature type="compositionally biased region" description="Polar residues" evidence="2">
    <location>
        <begin position="753"/>
        <end position="763"/>
    </location>
</feature>
<reference key="1">
    <citation type="journal article" date="2002" name="Nature">
        <title>The genome sequence of Schizosaccharomyces pombe.</title>
        <authorList>
            <person name="Wood V."/>
            <person name="Gwilliam R."/>
            <person name="Rajandream M.A."/>
            <person name="Lyne M.H."/>
            <person name="Lyne R."/>
            <person name="Stewart A."/>
            <person name="Sgouros J.G."/>
            <person name="Peat N."/>
            <person name="Hayles J."/>
            <person name="Baker S.G."/>
            <person name="Basham D."/>
            <person name="Bowman S."/>
            <person name="Brooks K."/>
            <person name="Brown D."/>
            <person name="Brown S."/>
            <person name="Chillingworth T."/>
            <person name="Churcher C.M."/>
            <person name="Collins M."/>
            <person name="Connor R."/>
            <person name="Cronin A."/>
            <person name="Davis P."/>
            <person name="Feltwell T."/>
            <person name="Fraser A."/>
            <person name="Gentles S."/>
            <person name="Goble A."/>
            <person name="Hamlin N."/>
            <person name="Harris D.E."/>
            <person name="Hidalgo J."/>
            <person name="Hodgson G."/>
            <person name="Holroyd S."/>
            <person name="Hornsby T."/>
            <person name="Howarth S."/>
            <person name="Huckle E.J."/>
            <person name="Hunt S."/>
            <person name="Jagels K."/>
            <person name="James K.D."/>
            <person name="Jones L."/>
            <person name="Jones M."/>
            <person name="Leather S."/>
            <person name="McDonald S."/>
            <person name="McLean J."/>
            <person name="Mooney P."/>
            <person name="Moule S."/>
            <person name="Mungall K.L."/>
            <person name="Murphy L.D."/>
            <person name="Niblett D."/>
            <person name="Odell C."/>
            <person name="Oliver K."/>
            <person name="O'Neil S."/>
            <person name="Pearson D."/>
            <person name="Quail M.A."/>
            <person name="Rabbinowitsch E."/>
            <person name="Rutherford K.M."/>
            <person name="Rutter S."/>
            <person name="Saunders D."/>
            <person name="Seeger K."/>
            <person name="Sharp S."/>
            <person name="Skelton J."/>
            <person name="Simmonds M.N."/>
            <person name="Squares R."/>
            <person name="Squares S."/>
            <person name="Stevens K."/>
            <person name="Taylor K."/>
            <person name="Taylor R.G."/>
            <person name="Tivey A."/>
            <person name="Walsh S.V."/>
            <person name="Warren T."/>
            <person name="Whitehead S."/>
            <person name="Woodward J.R."/>
            <person name="Volckaert G."/>
            <person name="Aert R."/>
            <person name="Robben J."/>
            <person name="Grymonprez B."/>
            <person name="Weltjens I."/>
            <person name="Vanstreels E."/>
            <person name="Rieger M."/>
            <person name="Schaefer M."/>
            <person name="Mueller-Auer S."/>
            <person name="Gabel C."/>
            <person name="Fuchs M."/>
            <person name="Duesterhoeft A."/>
            <person name="Fritzc C."/>
            <person name="Holzer E."/>
            <person name="Moestl D."/>
            <person name="Hilbert H."/>
            <person name="Borzym K."/>
            <person name="Langer I."/>
            <person name="Beck A."/>
            <person name="Lehrach H."/>
            <person name="Reinhardt R."/>
            <person name="Pohl T.M."/>
            <person name="Eger P."/>
            <person name="Zimmermann W."/>
            <person name="Wedler H."/>
            <person name="Wambutt R."/>
            <person name="Purnelle B."/>
            <person name="Goffeau A."/>
            <person name="Cadieu E."/>
            <person name="Dreano S."/>
            <person name="Gloux S."/>
            <person name="Lelaure V."/>
            <person name="Mottier S."/>
            <person name="Galibert F."/>
            <person name="Aves S.J."/>
            <person name="Xiang Z."/>
            <person name="Hunt C."/>
            <person name="Moore K."/>
            <person name="Hurst S.M."/>
            <person name="Lucas M."/>
            <person name="Rochet M."/>
            <person name="Gaillardin C."/>
            <person name="Tallada V.A."/>
            <person name="Garzon A."/>
            <person name="Thode G."/>
            <person name="Daga R.R."/>
            <person name="Cruzado L."/>
            <person name="Jimenez J."/>
            <person name="Sanchez M."/>
            <person name="del Rey F."/>
            <person name="Benito J."/>
            <person name="Dominguez A."/>
            <person name="Revuelta J.L."/>
            <person name="Moreno S."/>
            <person name="Armstrong J."/>
            <person name="Forsburg S.L."/>
            <person name="Cerutti L."/>
            <person name="Lowe T."/>
            <person name="McCombie W.R."/>
            <person name="Paulsen I."/>
            <person name="Potashkin J."/>
            <person name="Shpakovski G.V."/>
            <person name="Ussery D."/>
            <person name="Barrell B.G."/>
            <person name="Nurse P."/>
        </authorList>
    </citation>
    <scope>NUCLEOTIDE SEQUENCE [LARGE SCALE GENOMIC DNA]</scope>
    <source>
        <strain>972 / ATCC 24843</strain>
    </source>
</reference>
<reference key="2">
    <citation type="journal article" date="2006" name="Nat. Biotechnol.">
        <title>ORFeome cloning and global analysis of protein localization in the fission yeast Schizosaccharomyces pombe.</title>
        <authorList>
            <person name="Matsuyama A."/>
            <person name="Arai R."/>
            <person name="Yashiroda Y."/>
            <person name="Shirai A."/>
            <person name="Kamata A."/>
            <person name="Sekido S."/>
            <person name="Kobayashi Y."/>
            <person name="Hashimoto A."/>
            <person name="Hamamoto M."/>
            <person name="Hiraoka Y."/>
            <person name="Horinouchi S."/>
            <person name="Yoshida M."/>
        </authorList>
    </citation>
    <scope>SUBCELLULAR LOCATION [LARGE SCALE ANALYSIS]</scope>
</reference>
<protein>
    <recommendedName>
        <fullName>Protein cft1</fullName>
    </recommendedName>
    <alternativeName>
        <fullName>Cleavage factor two protein 1</fullName>
    </alternativeName>
</protein>
<proteinExistence type="inferred from homology"/>
<name>CFT1_SCHPO</name>